<evidence type="ECO:0000255" key="1">
    <source>
        <dbReference type="HAMAP-Rule" id="MF_01365"/>
    </source>
</evidence>
<evidence type="ECO:0000305" key="2"/>
<comment type="function">
    <text evidence="1">This protein binds to the 23S rRNA, and is important in its secondary structure. It is located near the subunit interface in the base of the L7/L12 stalk, and near the tRNA binding site of the peptidyltransferase center.</text>
</comment>
<comment type="subunit">
    <text evidence="1">Part of the 50S ribosomal subunit.</text>
</comment>
<comment type="similarity">
    <text evidence="1">Belongs to the universal ribosomal protein uL6 family.</text>
</comment>
<sequence>MSRIGKQPVSIPDKVKVSVKDGTVFVEGPKGRVQKTFAPAVKVTVADKQVTFAPTEESRFAKAMYGTARSIVAGMVKGVTEGYTKDLEIQGVGFKANLKGKQLDLALGYSHPILLDIPEGIKITVTDQTKVRVEGADKQLVGAVTAEIRGYYPPEPYKGKGVRIVGERVRRKEGKTVA</sequence>
<proteinExistence type="inferred from homology"/>
<keyword id="KW-1185">Reference proteome</keyword>
<keyword id="KW-0687">Ribonucleoprotein</keyword>
<keyword id="KW-0689">Ribosomal protein</keyword>
<keyword id="KW-0694">RNA-binding</keyword>
<keyword id="KW-0699">rRNA-binding</keyword>
<gene>
    <name evidence="1" type="primary">rplF</name>
    <name type="ordered locus">Oter_0211</name>
</gene>
<name>RL6_OPITP</name>
<protein>
    <recommendedName>
        <fullName evidence="1">Large ribosomal subunit protein uL6</fullName>
    </recommendedName>
    <alternativeName>
        <fullName evidence="2">50S ribosomal protein L6</fullName>
    </alternativeName>
</protein>
<dbReference type="EMBL" id="CP001032">
    <property type="protein sequence ID" value="ACB73502.1"/>
    <property type="molecule type" value="Genomic_DNA"/>
</dbReference>
<dbReference type="RefSeq" id="WP_012373040.1">
    <property type="nucleotide sequence ID" value="NC_010571.1"/>
</dbReference>
<dbReference type="SMR" id="B1ZND3"/>
<dbReference type="STRING" id="452637.Oter_0211"/>
<dbReference type="KEGG" id="ote:Oter_0211"/>
<dbReference type="eggNOG" id="COG0097">
    <property type="taxonomic scope" value="Bacteria"/>
</dbReference>
<dbReference type="HOGENOM" id="CLU_065464_1_2_0"/>
<dbReference type="OrthoDB" id="9805007at2"/>
<dbReference type="Proteomes" id="UP000007013">
    <property type="component" value="Chromosome"/>
</dbReference>
<dbReference type="GO" id="GO:0022625">
    <property type="term" value="C:cytosolic large ribosomal subunit"/>
    <property type="evidence" value="ECO:0007669"/>
    <property type="project" value="TreeGrafter"/>
</dbReference>
<dbReference type="GO" id="GO:0019843">
    <property type="term" value="F:rRNA binding"/>
    <property type="evidence" value="ECO:0007669"/>
    <property type="project" value="UniProtKB-UniRule"/>
</dbReference>
<dbReference type="GO" id="GO:0003735">
    <property type="term" value="F:structural constituent of ribosome"/>
    <property type="evidence" value="ECO:0007669"/>
    <property type="project" value="InterPro"/>
</dbReference>
<dbReference type="GO" id="GO:0002181">
    <property type="term" value="P:cytoplasmic translation"/>
    <property type="evidence" value="ECO:0007669"/>
    <property type="project" value="TreeGrafter"/>
</dbReference>
<dbReference type="FunFam" id="3.90.930.12:FF:000001">
    <property type="entry name" value="50S ribosomal protein L6"/>
    <property type="match status" value="1"/>
</dbReference>
<dbReference type="FunFam" id="3.90.930.12:FF:000002">
    <property type="entry name" value="50S ribosomal protein L6"/>
    <property type="match status" value="1"/>
</dbReference>
<dbReference type="Gene3D" id="3.90.930.12">
    <property type="entry name" value="Ribosomal protein L6, alpha-beta domain"/>
    <property type="match status" value="2"/>
</dbReference>
<dbReference type="HAMAP" id="MF_01365_B">
    <property type="entry name" value="Ribosomal_uL6_B"/>
    <property type="match status" value="1"/>
</dbReference>
<dbReference type="InterPro" id="IPR000702">
    <property type="entry name" value="Ribosomal_uL6-like"/>
</dbReference>
<dbReference type="InterPro" id="IPR036789">
    <property type="entry name" value="Ribosomal_uL6-like_a/b-dom_sf"/>
</dbReference>
<dbReference type="InterPro" id="IPR020040">
    <property type="entry name" value="Ribosomal_uL6_a/b-dom"/>
</dbReference>
<dbReference type="InterPro" id="IPR019906">
    <property type="entry name" value="Ribosomal_uL6_bac-type"/>
</dbReference>
<dbReference type="InterPro" id="IPR002358">
    <property type="entry name" value="Ribosomal_uL6_CS"/>
</dbReference>
<dbReference type="NCBIfam" id="TIGR03654">
    <property type="entry name" value="L6_bact"/>
    <property type="match status" value="1"/>
</dbReference>
<dbReference type="PANTHER" id="PTHR11655">
    <property type="entry name" value="60S/50S RIBOSOMAL PROTEIN L6/L9"/>
    <property type="match status" value="1"/>
</dbReference>
<dbReference type="PANTHER" id="PTHR11655:SF14">
    <property type="entry name" value="LARGE RIBOSOMAL SUBUNIT PROTEIN UL6M"/>
    <property type="match status" value="1"/>
</dbReference>
<dbReference type="Pfam" id="PF00347">
    <property type="entry name" value="Ribosomal_L6"/>
    <property type="match status" value="2"/>
</dbReference>
<dbReference type="PIRSF" id="PIRSF002162">
    <property type="entry name" value="Ribosomal_L6"/>
    <property type="match status" value="1"/>
</dbReference>
<dbReference type="PRINTS" id="PR00059">
    <property type="entry name" value="RIBOSOMALL6"/>
</dbReference>
<dbReference type="SUPFAM" id="SSF56053">
    <property type="entry name" value="Ribosomal protein L6"/>
    <property type="match status" value="2"/>
</dbReference>
<dbReference type="PROSITE" id="PS00525">
    <property type="entry name" value="RIBOSOMAL_L6_1"/>
    <property type="match status" value="1"/>
</dbReference>
<reference key="1">
    <citation type="journal article" date="2011" name="J. Bacteriol.">
        <title>Genome sequence of the verrucomicrobium Opitutus terrae PB90-1, an abundant inhabitant of rice paddy soil ecosystems.</title>
        <authorList>
            <person name="van Passel M.W."/>
            <person name="Kant R."/>
            <person name="Palva A."/>
            <person name="Copeland A."/>
            <person name="Lucas S."/>
            <person name="Lapidus A."/>
            <person name="Glavina del Rio T."/>
            <person name="Pitluck S."/>
            <person name="Goltsman E."/>
            <person name="Clum A."/>
            <person name="Sun H."/>
            <person name="Schmutz J."/>
            <person name="Larimer F.W."/>
            <person name="Land M.L."/>
            <person name="Hauser L."/>
            <person name="Kyrpides N."/>
            <person name="Mikhailova N."/>
            <person name="Richardson P.P."/>
            <person name="Janssen P.H."/>
            <person name="de Vos W.M."/>
            <person name="Smidt H."/>
        </authorList>
    </citation>
    <scope>NUCLEOTIDE SEQUENCE [LARGE SCALE GENOMIC DNA]</scope>
    <source>
        <strain>DSM 11246 / JCM 15787 / PB90-1</strain>
    </source>
</reference>
<feature type="chain" id="PRO_1000144024" description="Large ribosomal subunit protein uL6">
    <location>
        <begin position="1"/>
        <end position="178"/>
    </location>
</feature>
<accession>B1ZND3</accession>
<organism>
    <name type="scientific">Opitutus terrae (strain DSM 11246 / JCM 15787 / PB90-1)</name>
    <dbReference type="NCBI Taxonomy" id="452637"/>
    <lineage>
        <taxon>Bacteria</taxon>
        <taxon>Pseudomonadati</taxon>
        <taxon>Verrucomicrobiota</taxon>
        <taxon>Opitutia</taxon>
        <taxon>Opitutales</taxon>
        <taxon>Opitutaceae</taxon>
        <taxon>Opitutus</taxon>
    </lineage>
</organism>